<sequence>MAVQQNKKSRSARDMRRSHDALSENALSVEKTTGEVHLRHHVSPEGVYRGRKVVDKGADE</sequence>
<organism>
    <name type="scientific">Pseudomonas putida (strain ATCC 700007 / DSM 6899 / JCM 31910 / BCRC 17059 / LMG 24140 / F1)</name>
    <dbReference type="NCBI Taxonomy" id="351746"/>
    <lineage>
        <taxon>Bacteria</taxon>
        <taxon>Pseudomonadati</taxon>
        <taxon>Pseudomonadota</taxon>
        <taxon>Gammaproteobacteria</taxon>
        <taxon>Pseudomonadales</taxon>
        <taxon>Pseudomonadaceae</taxon>
        <taxon>Pseudomonas</taxon>
    </lineage>
</organism>
<gene>
    <name evidence="1" type="primary">rpmF</name>
    <name type="ordered locus">Pput_3803</name>
</gene>
<evidence type="ECO:0000255" key="1">
    <source>
        <dbReference type="HAMAP-Rule" id="MF_00340"/>
    </source>
</evidence>
<evidence type="ECO:0000256" key="2">
    <source>
        <dbReference type="SAM" id="MobiDB-lite"/>
    </source>
</evidence>
<evidence type="ECO:0000305" key="3"/>
<protein>
    <recommendedName>
        <fullName evidence="1">Large ribosomal subunit protein bL32</fullName>
    </recommendedName>
    <alternativeName>
        <fullName evidence="3">50S ribosomal protein L32</fullName>
    </alternativeName>
</protein>
<dbReference type="EMBL" id="CP000712">
    <property type="protein sequence ID" value="ABQ79927.1"/>
    <property type="molecule type" value="Genomic_DNA"/>
</dbReference>
<dbReference type="SMR" id="A5W717"/>
<dbReference type="KEGG" id="ppf:Pput_3803"/>
<dbReference type="eggNOG" id="COG0333">
    <property type="taxonomic scope" value="Bacteria"/>
</dbReference>
<dbReference type="HOGENOM" id="CLU_129084_2_1_6"/>
<dbReference type="GO" id="GO:0015934">
    <property type="term" value="C:large ribosomal subunit"/>
    <property type="evidence" value="ECO:0007669"/>
    <property type="project" value="InterPro"/>
</dbReference>
<dbReference type="GO" id="GO:0003735">
    <property type="term" value="F:structural constituent of ribosome"/>
    <property type="evidence" value="ECO:0007669"/>
    <property type="project" value="InterPro"/>
</dbReference>
<dbReference type="GO" id="GO:0006412">
    <property type="term" value="P:translation"/>
    <property type="evidence" value="ECO:0007669"/>
    <property type="project" value="UniProtKB-UniRule"/>
</dbReference>
<dbReference type="HAMAP" id="MF_00340">
    <property type="entry name" value="Ribosomal_bL32"/>
    <property type="match status" value="1"/>
</dbReference>
<dbReference type="InterPro" id="IPR002677">
    <property type="entry name" value="Ribosomal_bL32"/>
</dbReference>
<dbReference type="InterPro" id="IPR044957">
    <property type="entry name" value="Ribosomal_bL32_bact"/>
</dbReference>
<dbReference type="InterPro" id="IPR011332">
    <property type="entry name" value="Ribosomal_zn-bd"/>
</dbReference>
<dbReference type="NCBIfam" id="TIGR01031">
    <property type="entry name" value="rpmF_bact"/>
    <property type="match status" value="1"/>
</dbReference>
<dbReference type="PANTHER" id="PTHR35534">
    <property type="entry name" value="50S RIBOSOMAL PROTEIN L32"/>
    <property type="match status" value="1"/>
</dbReference>
<dbReference type="PANTHER" id="PTHR35534:SF1">
    <property type="entry name" value="LARGE RIBOSOMAL SUBUNIT PROTEIN BL32"/>
    <property type="match status" value="1"/>
</dbReference>
<dbReference type="Pfam" id="PF01783">
    <property type="entry name" value="Ribosomal_L32p"/>
    <property type="match status" value="1"/>
</dbReference>
<dbReference type="SUPFAM" id="SSF57829">
    <property type="entry name" value="Zn-binding ribosomal proteins"/>
    <property type="match status" value="1"/>
</dbReference>
<name>RL32_PSEP1</name>
<keyword id="KW-0687">Ribonucleoprotein</keyword>
<keyword id="KW-0689">Ribosomal protein</keyword>
<proteinExistence type="inferred from homology"/>
<comment type="similarity">
    <text evidence="1">Belongs to the bacterial ribosomal protein bL32 family.</text>
</comment>
<feature type="chain" id="PRO_1000005071" description="Large ribosomal subunit protein bL32">
    <location>
        <begin position="1"/>
        <end position="60"/>
    </location>
</feature>
<feature type="region of interest" description="Disordered" evidence="2">
    <location>
        <begin position="1"/>
        <end position="60"/>
    </location>
</feature>
<feature type="compositionally biased region" description="Basic and acidic residues" evidence="2">
    <location>
        <begin position="11"/>
        <end position="22"/>
    </location>
</feature>
<reference key="1">
    <citation type="submission" date="2007-05" db="EMBL/GenBank/DDBJ databases">
        <title>Complete sequence of Pseudomonas putida F1.</title>
        <authorList>
            <consortium name="US DOE Joint Genome Institute"/>
            <person name="Copeland A."/>
            <person name="Lucas S."/>
            <person name="Lapidus A."/>
            <person name="Barry K."/>
            <person name="Detter J.C."/>
            <person name="Glavina del Rio T."/>
            <person name="Hammon N."/>
            <person name="Israni S."/>
            <person name="Dalin E."/>
            <person name="Tice H."/>
            <person name="Pitluck S."/>
            <person name="Chain P."/>
            <person name="Malfatti S."/>
            <person name="Shin M."/>
            <person name="Vergez L."/>
            <person name="Schmutz J."/>
            <person name="Larimer F."/>
            <person name="Land M."/>
            <person name="Hauser L."/>
            <person name="Kyrpides N."/>
            <person name="Lykidis A."/>
            <person name="Parales R."/>
            <person name="Richardson P."/>
        </authorList>
    </citation>
    <scope>NUCLEOTIDE SEQUENCE [LARGE SCALE GENOMIC DNA]</scope>
    <source>
        <strain>ATCC 700007 / DSM 6899 / JCM 31910 / BCRC 17059 / LMG 24140 / F1</strain>
    </source>
</reference>
<accession>A5W717</accession>